<dbReference type="EC" id="3.5.4.16" evidence="1"/>
<dbReference type="EMBL" id="CP000264">
    <property type="protein sequence ID" value="ABD54774.1"/>
    <property type="molecule type" value="Genomic_DNA"/>
</dbReference>
<dbReference type="RefSeq" id="WP_011454979.1">
    <property type="nucleotide sequence ID" value="NC_007802.1"/>
</dbReference>
<dbReference type="SMR" id="Q28R88"/>
<dbReference type="STRING" id="290400.Jann_1857"/>
<dbReference type="KEGG" id="jan:Jann_1857"/>
<dbReference type="eggNOG" id="COG1469">
    <property type="taxonomic scope" value="Bacteria"/>
</dbReference>
<dbReference type="HOGENOM" id="CLU_062816_0_1_5"/>
<dbReference type="OrthoDB" id="239637at2"/>
<dbReference type="UniPathway" id="UPA00848">
    <property type="reaction ID" value="UER00151"/>
</dbReference>
<dbReference type="Proteomes" id="UP000008326">
    <property type="component" value="Chromosome"/>
</dbReference>
<dbReference type="GO" id="GO:0003934">
    <property type="term" value="F:GTP cyclohydrolase I activity"/>
    <property type="evidence" value="ECO:0007669"/>
    <property type="project" value="UniProtKB-UniRule"/>
</dbReference>
<dbReference type="GO" id="GO:0046654">
    <property type="term" value="P:tetrahydrofolate biosynthetic process"/>
    <property type="evidence" value="ECO:0007669"/>
    <property type="project" value="UniProtKB-UniRule"/>
</dbReference>
<dbReference type="Gene3D" id="3.10.270.10">
    <property type="entry name" value="Urate Oxidase"/>
    <property type="match status" value="1"/>
</dbReference>
<dbReference type="HAMAP" id="MF_01527_B">
    <property type="entry name" value="GTP_cyclohydrol_B"/>
    <property type="match status" value="1"/>
</dbReference>
<dbReference type="InterPro" id="IPR022838">
    <property type="entry name" value="GTP_cyclohydrolase_FolE2"/>
</dbReference>
<dbReference type="InterPro" id="IPR003801">
    <property type="entry name" value="GTP_cyclohydrolase_FolE2/MptA"/>
</dbReference>
<dbReference type="NCBIfam" id="NF010200">
    <property type="entry name" value="PRK13674.1-1"/>
    <property type="match status" value="1"/>
</dbReference>
<dbReference type="PANTHER" id="PTHR36445">
    <property type="entry name" value="GTP CYCLOHYDROLASE MPTA"/>
    <property type="match status" value="1"/>
</dbReference>
<dbReference type="PANTHER" id="PTHR36445:SF1">
    <property type="entry name" value="GTP CYCLOHYDROLASE MPTA"/>
    <property type="match status" value="1"/>
</dbReference>
<dbReference type="Pfam" id="PF02649">
    <property type="entry name" value="GCHY-1"/>
    <property type="match status" value="1"/>
</dbReference>
<reference key="1">
    <citation type="submission" date="2006-02" db="EMBL/GenBank/DDBJ databases">
        <title>Complete sequence of chromosome of Jannaschia sp. CCS1.</title>
        <authorList>
            <consortium name="US DOE Joint Genome Institute"/>
            <person name="Copeland A."/>
            <person name="Lucas S."/>
            <person name="Lapidus A."/>
            <person name="Barry K."/>
            <person name="Detter J.C."/>
            <person name="Glavina del Rio T."/>
            <person name="Hammon N."/>
            <person name="Israni S."/>
            <person name="Pitluck S."/>
            <person name="Brettin T."/>
            <person name="Bruce D."/>
            <person name="Han C."/>
            <person name="Tapia R."/>
            <person name="Gilna P."/>
            <person name="Chertkov O."/>
            <person name="Saunders E."/>
            <person name="Schmutz J."/>
            <person name="Larimer F."/>
            <person name="Land M."/>
            <person name="Kyrpides N."/>
            <person name="Lykidis A."/>
            <person name="Moran M.A."/>
            <person name="Belas R."/>
            <person name="Ye W."/>
            <person name="Buchan A."/>
            <person name="Gonzalez J.M."/>
            <person name="Schell M.A."/>
            <person name="Richardson P."/>
        </authorList>
    </citation>
    <scope>NUCLEOTIDE SEQUENCE [LARGE SCALE GENOMIC DNA]</scope>
    <source>
        <strain>CCS1</strain>
    </source>
</reference>
<keyword id="KW-0378">Hydrolase</keyword>
<keyword id="KW-1185">Reference proteome</keyword>
<organism>
    <name type="scientific">Jannaschia sp. (strain CCS1)</name>
    <dbReference type="NCBI Taxonomy" id="290400"/>
    <lineage>
        <taxon>Bacteria</taxon>
        <taxon>Pseudomonadati</taxon>
        <taxon>Pseudomonadota</taxon>
        <taxon>Alphaproteobacteria</taxon>
        <taxon>Rhodobacterales</taxon>
        <taxon>Roseobacteraceae</taxon>
        <taxon>Jannaschia</taxon>
    </lineage>
</organism>
<gene>
    <name evidence="1" type="primary">folE2</name>
    <name type="ordered locus">Jann_1857</name>
</gene>
<protein>
    <recommendedName>
        <fullName evidence="1">GTP cyclohydrolase FolE2</fullName>
        <ecNumber evidence="1">3.5.4.16</ecNumber>
    </recommendedName>
</protein>
<feature type="chain" id="PRO_0000289494" description="GTP cyclohydrolase FolE2">
    <location>
        <begin position="1"/>
        <end position="362"/>
    </location>
</feature>
<feature type="site" description="May be catalytically important" evidence="1">
    <location>
        <position position="222"/>
    </location>
</feature>
<comment type="function">
    <text evidence="1">Converts GTP to 7,8-dihydroneopterin triphosphate.</text>
</comment>
<comment type="catalytic activity">
    <reaction evidence="1">
        <text>GTP + H2O = 7,8-dihydroneopterin 3'-triphosphate + formate + H(+)</text>
        <dbReference type="Rhea" id="RHEA:17473"/>
        <dbReference type="ChEBI" id="CHEBI:15377"/>
        <dbReference type="ChEBI" id="CHEBI:15378"/>
        <dbReference type="ChEBI" id="CHEBI:15740"/>
        <dbReference type="ChEBI" id="CHEBI:37565"/>
        <dbReference type="ChEBI" id="CHEBI:58462"/>
        <dbReference type="EC" id="3.5.4.16"/>
    </reaction>
</comment>
<comment type="pathway">
    <text evidence="1">Cofactor biosynthesis; 7,8-dihydroneopterin triphosphate biosynthesis; 7,8-dihydroneopterin triphosphate from GTP: step 1/1.</text>
</comment>
<comment type="similarity">
    <text evidence="1">Belongs to the GTP cyclohydrolase IV family.</text>
</comment>
<accession>Q28R88</accession>
<evidence type="ECO:0000255" key="1">
    <source>
        <dbReference type="HAMAP-Rule" id="MF_01527"/>
    </source>
</evidence>
<name>GCH4_JANSC</name>
<sequence>MNVHVKTADQTPSTVQAQDALAILSAWASEASADQIDALDPGIARLVRVQAYPDLRAEYPGDFTVDEAYRATLPDLQNGPASLIKGANRRIQHVGISNFRLPIRYAVQDGSEVMLETSVTGTVSLEADQKGINMSRIMRSFYKHADASFGFDVIEAALDDYKADLGSFDARIQMRLSYPMKVDSLRSGLSGWQYYDIALELVERGGVRQRIVHLDYVYSSTCPCSLELSEHARATRGQLATPHSQRSVARISVELQGQGVWFEDLIEMARSGVPTETQVMVKREDEQAFAELNAANPIFVEDAARLFAEQLQAHSGVGDFRVMASHQESLHSHDAVSLLTEGDTFAEVSLDPKLFPSLIHVG</sequence>
<proteinExistence type="inferred from homology"/>